<sequence>MGAQVSRQNVGTHSTQNMVSNGSSLNYFNINYFKDAASSGASRLDFSQDPSKFTDPVKDVLEKGIPTLQSPSVEACGYSDRIIQITRGDSTITSQDVANAVVGYGVWPHYLTPQDATAIDKPTQPDTSSNRFYTLDSKMWNSTSKGWWWKLPDALKDMGIFGENMFYHFLGRSGYTVHVQCNASKFHQGTLLVVMIPEHQLATVNKGNVNAGYKYTHPGEAGREVGTQVENEKQPSDDNWLNFDGTLLGNLLIFPHQFINLRSNNSATLIVPYVNAVPMDSMVRHNNWSLVIIPVCQLQSNNISNIVPITVSISPMCAEFSGARAKTVVQGLPVYVTPGSGQFMTTDDMQSPCALPWYHPTKEIFIPGEVKNLIEMCQVDTLIPINSTQSNIGNVSMYTVTLSPQTKLAEEIFAIKVDIASHPLATTLIGEIASYFTHWTGSLRFSFMFCGTANTTLKVLLAYTPPGIGKPRSRKEAMLGTHVVWDVGLQSTVSLVVPWISASQYRFTTPDTYSSAGYITCWYQTNFVVPPNTPNTAEMLCFVSGCKDFCLRMARDTDLHKQTGPITQNPVERYVDEVLNEVLVVPNINQSHPTTSNAAPVLDAAETGHTNKIQPEDTIETRYVQSSQTLDEMSVESFLGRSGCIHESVLDIVDNYNDQSFTKWNINLQEMAQIRRKFEMFTYARFDSEITMVPSVAAKDGHIGHIVMQYMYVPPGAPIPTTRDDYAWQSGTNASVFWQHGQPFPRFSLPFLSIASAYYMFYDGYDGDTYKSRYGTVVTNDMGTLCSRIVTSEQLHKVKVVTRIYHKAKHTKAWCPRPPRAVQYSHTHTTNYKLSSEVHNDVAIRPRTNLTTVGPSDMYVHVGNLIYRNLHLFNSDIHDSILVSYSSDLIIYRTSTQGDGYIPTCNCTEATYYCKHKNRYYPINVTPHDWYEIQESEYYPKHIQYNLLIGEGPCEPGDCGGKLLCKHGVIGIITAGGEGHVAFIDLRHFHCAEEQGITDYIHMLGEAFGSGFVDSVKDQINSINPINNISSKMVKWMLRIISAMVIIIRNSSDPQTIIATLTLIGCNGSPWRFLKEKFCKWTQLTYIHKESDSWLKKFTEMCNAARGLEWIGNKISKFIDWMKSMLPQAQLKVKYLSELKKLNFLEKQVENLRAADTNTQEKIKCEIDTLHDLSCKFLPLYASEAKRIKVLYHKCTNIIKQKKRSEPVAVMIHGPPGTGKSITTSFLARMITNESDIYSLPPDPKYFDGYDNQSVVIMDDIMQNPGGEDMTLFCQMVSSVTFIPPMADLPDKGKPFDSRFVLCSTNHSLLAPPTISSLPAMNRRFYLDLDILVHDNYKDNQGKLDVSRAFRLCDVDSKIGNAKCCPFVCGKAVTFKDRNTCRTYSLSQIYNQILEEDKRRRQVVDVMSAIFQGPISMDKPPPPAITDLLRSVRTPEVIKYCQDNKWIVPADCQIERDLNIANSIITIIANIISIAGIIYIIYKLFCSLQGPYSGEPKPKTKVPERRVVAQGPEEEFGMSIIKNNTCVVTTTNGKFTGLGIYDRILILPTHADPGSEIQVNGIHTKVLDSYDLFNKEGVKLEITVLKLDRNEKFRDIRKYIPESEDDYPECNLALVANQTEPTIIKVGDVVSYGNILLSGTQTARMLKYNYPTKSGYCGGVLYKIGQILGIHVGGNGRDGFSSMLLRSYFTEQQGQIQISKHVKDVGLPSIHTPTKTKLQPSVFYDIFPGSKEPAVLTEKDPRLKVDFDSALFSKYKGNTECSLNEHIQVAVAHYSAQLATLDIDPQPIAMEDSVFGMDGLEALDLNTSAGYPYVTLGIKKKDLINNKTKDISKLKLALDKYDVDLPMITFLKDELRKKDKIAAGKTRVIEASSINDTILFRTVYGNLFSKFHLNPGVVTGCAVGCDPETFWSKIPLMLDGDCIMAFDYTNYDGSIHPIWFKALGMVLDNLSFNPTLINRLCNSKHIFKSTYYEVEGGVPSGCSGTSIFNSMINNIIIRTLVLDAYKHIDLDKLKIIAYGDDVIFSYKYKLDMEAIAKEGQKYGLTITPADKSSEFKELDYGNVTFLKRGFRQDDKYKFLIHPTFPVEEIYESIRWTKKPSQMQEHVLSLCHLMWHNGPEIYKDFETKIRSVSAGRALYIPPYELLRHEWYEKF</sequence>
<organism>
    <name type="scientific">Human rhinovirus 16</name>
    <name type="common">HRV-16</name>
    <dbReference type="NCBI Taxonomy" id="31708"/>
    <lineage>
        <taxon>Viruses</taxon>
        <taxon>Riboviria</taxon>
        <taxon>Orthornavirae</taxon>
        <taxon>Pisuviricota</taxon>
        <taxon>Pisoniviricetes</taxon>
        <taxon>Picornavirales</taxon>
        <taxon>Picornaviridae</taxon>
        <taxon>Ensavirinae</taxon>
        <taxon>Enterovirus</taxon>
        <taxon>Rhinovirus A</taxon>
    </lineage>
</organism>
<protein>
    <recommendedName>
        <fullName>Genome polyprotein</fullName>
    </recommendedName>
    <component>
        <recommendedName>
            <fullName>P1</fullName>
        </recommendedName>
    </component>
    <component>
        <recommendedName>
            <fullName>Capsid protein VP0</fullName>
        </recommendedName>
        <alternativeName>
            <fullName>VP4-VP2</fullName>
        </alternativeName>
    </component>
    <component>
        <recommendedName>
            <fullName>Capsid protein VP4</fullName>
        </recommendedName>
        <alternativeName>
            <fullName>P1A</fullName>
        </alternativeName>
        <alternativeName>
            <fullName>Virion protein 4</fullName>
        </alternativeName>
    </component>
    <component>
        <recommendedName>
            <fullName>Capsid protein VP2</fullName>
        </recommendedName>
        <alternativeName>
            <fullName>P1B</fullName>
        </alternativeName>
        <alternativeName>
            <fullName>Virion protein 2</fullName>
        </alternativeName>
    </component>
    <component>
        <recommendedName>
            <fullName>Capsid protein VP3</fullName>
        </recommendedName>
        <alternativeName>
            <fullName>P1C</fullName>
        </alternativeName>
        <alternativeName>
            <fullName>Virion protein 3</fullName>
        </alternativeName>
    </component>
    <component>
        <recommendedName>
            <fullName>Capsid protein VP1</fullName>
        </recommendedName>
        <alternativeName>
            <fullName>P1D</fullName>
        </alternativeName>
        <alternativeName>
            <fullName>Virion protein 1</fullName>
        </alternativeName>
    </component>
    <component>
        <recommendedName>
            <fullName>P2</fullName>
        </recommendedName>
    </component>
    <component>
        <recommendedName>
            <fullName>Protease 2A</fullName>
            <shortName>P2A</shortName>
            <ecNumber evidence="2">3.4.22.29</ecNumber>
        </recommendedName>
        <alternativeName>
            <fullName>Picornain 2A</fullName>
        </alternativeName>
        <alternativeName>
            <fullName>Protein 2A</fullName>
        </alternativeName>
    </component>
    <component>
        <recommendedName>
            <fullName>Protein 2B</fullName>
            <shortName>P2B</shortName>
        </recommendedName>
    </component>
    <component>
        <recommendedName>
            <fullName>Protein 2C</fullName>
            <shortName>P2C</shortName>
            <ecNumber evidence="2">3.6.1.15</ecNumber>
        </recommendedName>
    </component>
    <component>
        <recommendedName>
            <fullName>P3</fullName>
        </recommendedName>
    </component>
    <component>
        <recommendedName>
            <fullName>Protein 3AB</fullName>
        </recommendedName>
    </component>
    <component>
        <recommendedName>
            <fullName>Protein 3A</fullName>
            <shortName>P3A</shortName>
        </recommendedName>
    </component>
    <component>
        <recommendedName>
            <fullName>Viral protein genome-linked</fullName>
            <shortName>VPg</shortName>
        </recommendedName>
        <alternativeName>
            <fullName>Protein 3B</fullName>
            <shortName>P3B</shortName>
        </alternativeName>
    </component>
    <component>
        <recommendedName>
            <fullName>Protein 3CD</fullName>
            <ecNumber>3.4.22.28</ecNumber>
        </recommendedName>
    </component>
    <component>
        <recommendedName>
            <fullName evidence="10">Protease 3C</fullName>
            <ecNumber evidence="10">3.4.22.28</ecNumber>
        </recommendedName>
        <alternativeName>
            <fullName evidence="10">Picornain 3C</fullName>
            <shortName evidence="10">P3C</shortName>
        </alternativeName>
    </component>
    <component>
        <recommendedName>
            <fullName evidence="8">RNA-directed RNA polymerase</fullName>
            <shortName>RdRp</shortName>
            <ecNumber evidence="8">2.7.7.48</ecNumber>
        </recommendedName>
        <alternativeName>
            <fullName>3D polymerase</fullName>
            <shortName>3Dpol</shortName>
        </alternativeName>
        <alternativeName>
            <fullName>Protein 3D</fullName>
            <shortName>3D</shortName>
        </alternativeName>
    </component>
</protein>
<organismHost>
    <name type="scientific">Homo sapiens</name>
    <name type="common">Human</name>
    <dbReference type="NCBI Taxonomy" id="9606"/>
</organismHost>
<reference key="1">
    <citation type="journal article" date="1995" name="Virus Genes">
        <title>Complete sequence of the RNA genome of human rhinovirus 16, a clinically useful common cold virus belonging to the ICAM-1 receptor group.</title>
        <authorList>
            <person name="Lee W.M."/>
            <person name="Wang W."/>
            <person name="Rueckert R.R."/>
        </authorList>
    </citation>
    <scope>NUCLEOTIDE SEQUENCE [GENOMIC RNA]</scope>
</reference>
<reference key="2">
    <citation type="journal article" date="2009" name="J. Virol.">
        <title>Rhinovirus 3C protease can localize in the nucleus and alter active and passive nucleocytoplasmic transport.</title>
        <authorList>
            <person name="Ghildyal R."/>
            <person name="Jordan B."/>
            <person name="Li D."/>
            <person name="Dagher H."/>
            <person name="Bardin P.G."/>
            <person name="Gern J.E."/>
            <person name="Jans D.A."/>
        </authorList>
    </citation>
    <scope>FUNCTION (PROTEASE 3C)</scope>
</reference>
<reference key="3">
    <citation type="journal article" date="2012" name="Adv. Virol.">
        <title>Productive entry pathways of human rhinoviruses.</title>
        <authorList>
            <person name="Fuchs R."/>
            <person name="Blaas D."/>
        </authorList>
    </citation>
    <scope>REVIEW</scope>
</reference>
<reference key="4">
    <citation type="journal article" date="2020" name="Science">
        <title>Enteroviral 3C protease activates the human NLRP1 inflammasome in airway epithelia.</title>
        <authorList>
            <person name="Robinson K.S."/>
            <person name="Teo D.E.T."/>
            <person name="Tan K.S."/>
            <person name="Toh G.A."/>
            <person name="Ong H.H."/>
            <person name="Lim C.K."/>
            <person name="Lay K."/>
            <person name="Au B.V."/>
            <person name="Lew T.S."/>
            <person name="Chu J.J.H."/>
            <person name="Chow V.T.K."/>
            <person name="Wang Y."/>
            <person name="Zhong F.L."/>
            <person name="Reversade B."/>
        </authorList>
    </citation>
    <scope>FUNCTION (PROTEASE 3C)</scope>
</reference>
<reference key="5">
    <citation type="journal article" date="1993" name="Structure">
        <title>The structure of human rhinovirus 16.</title>
        <authorList>
            <person name="Oliveira M.A."/>
            <person name="Zhao R."/>
            <person name="Lee W.M."/>
            <person name="Kremer M.J."/>
            <person name="Minor I."/>
            <person name="Rueckert R.R."/>
            <person name="Diana G.D."/>
            <person name="Pevear D.C."/>
            <person name="Dutko F.J."/>
            <person name="McKinlay M.A."/>
            <person name="Rossmann M.G."/>
        </authorList>
    </citation>
    <scope>X-RAY CRYSTALLOGRAPHY (3.5 ANGSTROMS) OF 1-853</scope>
</reference>
<reference key="6">
    <citation type="journal article" date="1997" name="Structure">
        <title>The refined structure of human rhinovirus 16 at 2.15-A resolution: implications for the viral life cycle.</title>
        <authorList>
            <person name="Hadfield A.T."/>
            <person name="Lee W.M."/>
            <person name="Zhao R."/>
            <person name="Oliveira M.A."/>
            <person name="Minor I."/>
            <person name="Rueckert R.R."/>
            <person name="Rossmann M.G."/>
        </authorList>
    </citation>
    <scope>X-RAY CRYSTALLOGRAPHY (2.15 ANGSTROMS) OF 1-853</scope>
    <scope>SEQUENCE REVISION TO 547-548</scope>
</reference>
<accession>Q82122</accession>
<name>POLG_HRV16</name>
<comment type="function">
    <molecule>Capsid protein VP1</molecule>
    <text evidence="2">Forms an icosahedral capsid of pseudo T=3 symmetry with capsid proteins VP2 and VP3 (By similarity). The capsid is 300 Angstroms in diameter, composed of 60 copies of each capsid protein and enclosing the viral positive strand RNA genome (By similarity). Capsid protein VP1 mainly forms the vertices of the capsid (By similarity). Capsid protein VP1 interacts with host cell receptor to provide virion attachment to target host cells (By similarity). This attachment induces virion internalization (By similarity). Tyrosine kinases are probably involved in the entry process (By similarity). After binding to its receptor, the capsid undergoes conformational changes (By similarity). Capsid protein VP1 N-terminus (that contains an amphipathic alpha-helix) and capsid protein VP4 are externalized (By similarity). Together, they shape a pore in the host membrane through which viral genome is translocated to host cell cytoplasm (By similarity).</text>
</comment>
<comment type="function">
    <molecule>Capsid protein VP2</molecule>
    <text evidence="2">Forms an icosahedral capsid of pseudo T=3 symmetry with capsid proteins VP2 and VP3 (By similarity). The capsid is 300 Angstroms in diameter, composed of 60 copies of each capsid protein and enclosing the viral positive strand RNA genome (By similarity).</text>
</comment>
<comment type="function">
    <molecule>Capsid protein VP3</molecule>
    <text evidence="2">Forms an icosahedral capsid of pseudo T=3 symmetry with capsid proteins VP2 and VP3 (By similarity). The capsid is 300 Angstroms in diameter, composed of 60 copies of each capsid protein and enclosing the viral positive strand RNA genome (By similarity).</text>
</comment>
<comment type="function">
    <molecule>Capsid protein VP4</molecule>
    <text evidence="2">Lies on the inner surface of the capsid shell (By similarity). After binding to the host receptor, the capsid undergoes conformational changes (By similarity). Capsid protein VP4 is released, Capsid protein VP1 N-terminus is externalized, and together, they shape a pore in the host membrane through which the viral genome is translocated into the host cell cytoplasm (By similarity).</text>
</comment>
<comment type="function">
    <molecule>Capsid protein VP0</molecule>
    <text evidence="2">Component of immature procapsids, which is cleaved into capsid proteins VP4 and VP2 after maturation (By similarity). Allows the capsid to remain inactive before the maturation step (By similarity).</text>
</comment>
<comment type="function">
    <molecule>Protease 2A</molecule>
    <text evidence="2 3 5">Cysteine protease that cleaves viral polyprotein and specific host proteins (By similarity). It is responsible for the autocatalytic cleavage between the P1 and P2 regions, which is the first cleavage occurring in the polyprotein (By similarity). Also cleaves the host translation initiation factor EIF4G1, in order to shut down the capped cellular mRNA translation (By similarity). Inhibits the host nucleus-cytoplasm protein and RNA trafficking by cleaving host members of the nuclear pores (By similarity). Counteracts stress granule formation probably by antagonizing its assembly or promoting its dissassembly (By similarity).</text>
</comment>
<comment type="function">
    <molecule>Protein 2B</molecule>
    <text evidence="2">Plays an essential role in the virus replication cycle by acting as a viroporin. Creates a pore in the host endoplasmic reticulum and as a consequence releases Ca2+ in the cytoplasm of infected cell. In turn, high levels of cytoplasmic calcium may trigger membrane trafficking and transport of viral ER-associated proteins to viroplasms, sites of viral genome replication.</text>
</comment>
<comment type="function">
    <molecule>Protein 2C</molecule>
    <text evidence="2">Induces and associates with structural rearrangements of intracellular membranes. Displays RNA-binding, nucleotide binding and NTPase activities. May play a role in virion morphogenesis and viral RNA encapsidation by interacting with the capsid protein VP3.</text>
</comment>
<comment type="function">
    <molecule>Protein 3A</molecule>
    <text evidence="2 5">Localizes the viral replication complex to the surface of membranous vesicles (By similarity). It inhibits host cell endoplasmic reticulum-to-Golgi apparatus transport and causes the disassembly of the Golgi complex, possibly through GBF1 interaction (By similarity). This would result in depletion of MHC, trail receptors and IFN receptors at the host cell surface (By similarity). Plays an essential role in viral RNA replication by recruiting ACBD3 and PI4KB at the viral replication sites, thereby allowing the formation of the rearranged membranous structures where viral replication takes place (By similarity).</text>
</comment>
<comment type="function">
    <molecule>Viral protein genome-linked</molecule>
    <text evidence="2">Acts as a primer for viral RNA replication and remains covalently bound to viral genomic RNA. VPg is uridylylated prior to priming replication into VPg-pUpU. The oriI viral genomic sequence may act as a template for this. The VPg-pUpU is then used as primer on the genomic RNA poly(A) by the RNA-dependent RNA polymerase to replicate the viral genome. During genome replication, the VPg-RNA linkage is removed by the host TDP2, thereby accelerating replication. During the late stage of the replication cycle, host TDP2 is excluded from sites of viral RNA synthesis and encapsidation, allowing for the generation of progeny virions.</text>
</comment>
<comment type="function">
    <molecule>Protein 3CD</molecule>
    <text evidence="2">Involved in the viral replication complex and viral polypeptide maturation. It exhibits protease activity with a specificity and catalytic efficiency that is different from protease 3C. Protein 3CD lacks polymerase activity. Protein 3CD binds to the 5'UTR of the viral genome.</text>
</comment>
<comment type="function">
    <molecule>Protease 3C</molecule>
    <text evidence="2 4 11">Major viral protease that mediates proteolytic processing of the polyprotein (By similarity). Cleaves host EIF5B, contributing to host translation shutoff (By similarity). Also cleaves host PABPC1, contributing to host translation shutoff (By similarity). Cleaves host NLRP1, triggers host N-glycine-mediated degradation of the autoinhibitory NLRP1 N-terminal fragment (PubMed:33093214).</text>
</comment>
<comment type="function">
    <molecule>RNA-directed RNA polymerase</molecule>
    <text evidence="2">Replicates the viral genomic RNA on the surface of intracellular membranes. May form linear arrays of subunits that propagate along a strong head-to-tail interaction called interface-I. Covalently attaches UMP to a tyrosine of VPg, which is used to prime RNA synthesis. The positive stranded RNA genome is first replicated at virus induced membranous vesicles, creating a dsRNA genomic replication form. This dsRNA is then used as template to synthesize positive stranded RNA genomes. ss(+)RNA genomes are either translated, replicated or encapsidated.</text>
</comment>
<comment type="catalytic activity">
    <molecule>Protein 2C</molecule>
    <reaction evidence="2">
        <text>a ribonucleoside 5'-triphosphate + H2O = a ribonucleoside 5'-diphosphate + phosphate + H(+)</text>
        <dbReference type="Rhea" id="RHEA:23680"/>
        <dbReference type="ChEBI" id="CHEBI:15377"/>
        <dbReference type="ChEBI" id="CHEBI:15378"/>
        <dbReference type="ChEBI" id="CHEBI:43474"/>
        <dbReference type="ChEBI" id="CHEBI:57930"/>
        <dbReference type="ChEBI" id="CHEBI:61557"/>
        <dbReference type="EC" id="3.6.1.15"/>
    </reaction>
</comment>
<comment type="catalytic activity">
    <molecule>Protease 2A</molecule>
    <reaction evidence="2">
        <text>Selective cleavage of Tyr-|-Gly bond in the picornavirus polyprotein.</text>
        <dbReference type="EC" id="3.4.22.29"/>
    </reaction>
</comment>
<comment type="catalytic activity">
    <molecule>RNA-directed RNA polymerase</molecule>
    <reaction evidence="8">
        <text>RNA(n) + a ribonucleoside 5'-triphosphate = RNA(n+1) + diphosphate</text>
        <dbReference type="Rhea" id="RHEA:21248"/>
        <dbReference type="Rhea" id="RHEA-COMP:14527"/>
        <dbReference type="Rhea" id="RHEA-COMP:17342"/>
        <dbReference type="ChEBI" id="CHEBI:33019"/>
        <dbReference type="ChEBI" id="CHEBI:61557"/>
        <dbReference type="ChEBI" id="CHEBI:140395"/>
        <dbReference type="EC" id="2.7.7.48"/>
    </reaction>
</comment>
<comment type="catalytic activity">
    <molecule>Protease 3C</molecule>
    <reaction evidence="10">
        <text>Selective cleavage of Gln-|-Gly bond in the poliovirus polyprotein. In other picornavirus reactions Glu may be substituted for Gln, and Ser or Thr for Gly.</text>
        <dbReference type="EC" id="3.4.22.28"/>
    </reaction>
</comment>
<comment type="cofactor">
    <molecule>RNA-directed RNA polymerase</molecule>
    <cofactor evidence="2">
        <name>Mg(2+)</name>
        <dbReference type="ChEBI" id="CHEBI:18420"/>
    </cofactor>
    <text evidence="2 4">Binds 2 magnesium ions that constitute a dinuclear catalytic metal center (By similarity). The magnesium ions are not prebound but only present for catalysis (By similarity). Requires the presence of 3CDpro or 3CPro (By similarity).</text>
</comment>
<comment type="activity regulation">
    <molecule>RNA-directed RNA polymerase</molecule>
    <text evidence="2">Replication or transcription is subject to high level of random mutations by the nucleotide analog ribavirin.</text>
</comment>
<comment type="subunit">
    <molecule>Capsid protein VP0</molecule>
    <text evidence="2">Interacts with capsid protein VP1 and capsid protein VP3 to form heterotrimeric protomers.</text>
</comment>
<comment type="subunit">
    <molecule>Capsid protein VP1</molecule>
    <text evidence="2">Interacts with capsid protein VP0, and capsid protein VP3 to form heterotrimeric protomers (By similarity). Five protomers subsequently associate to form pentamers which serve as building blocks for the capsid (By similarity). Interacts with capsid protein VP2, capsid protein VP3 and capsid protein VP4 following cleavage of capsid protein VP0 (By similarity).</text>
</comment>
<comment type="subunit">
    <molecule>Capsid protein VP2</molecule>
    <text evidence="2">Interacts with capsid protein VP1 and capsid protein VP3 in the mature capsid.</text>
</comment>
<comment type="subunit">
    <molecule>Capsid protein VP3</molecule>
    <text evidence="2">Interacts with capsid protein VP0 and capsid protein VP1 to form heterotrimeric protomers (By similarity). Five protomers subsequently associate to form pentamers which serve as building blocks for the capsid (By similarity). Interacts with capsid protein VP4 in the mature capsid (By similarity). Interacts with protein 2C; this interaction may be important for virion morphogenesis (By similarity).</text>
</comment>
<comment type="subunit">
    <molecule>Capsid protein VP4</molecule>
    <text evidence="2">Interacts with capsid protein VP1 and capsid protein VP3.</text>
</comment>
<comment type="subunit">
    <molecule>Protease 2A</molecule>
    <text evidence="5">Homodimer.</text>
</comment>
<comment type="subunit">
    <molecule>Protein 2C</molecule>
    <text evidence="2">Homohexamer; forms a hexameric ring structure with 6-fold symmetry characteristic of AAA+ ATPases (By similarity). Interacts (via N-terminus) with host RTN3 (via reticulon domain); this interaction is important for viral replication (By similarity). Interacts with capsid protein VP3; this interaction may be important for virion morphogenesis (By similarity).</text>
</comment>
<comment type="subunit">
    <molecule>Protein 3AB</molecule>
    <text evidence="2">Interacts with protein 3CD.</text>
</comment>
<comment type="subunit">
    <molecule>Protein 3A</molecule>
    <text evidence="2">Homodimer (By similarity). Interacts with host GBF1 (By similarity). Interacts (via GOLD domain) with host ACBD3 (via GOLD domain); this interaction allows the formation of a viral protein 3A/ACBD3 heterotetramer with a 2:2 stoichiometry, which will stimulate the recruitment of host PI4KB in order to synthesize PI4P at the viral RNA replication sites (By similarity).</text>
</comment>
<comment type="subunit">
    <molecule>Viral protein genome-linked</molecule>
    <text evidence="2">Interacts with RNA-directed RNA polymerase.</text>
</comment>
<comment type="subunit">
    <molecule>Protein 3CD</molecule>
    <text evidence="2">Interacts with protein 3AB and with RNA-directed RNA polymerase.</text>
</comment>
<comment type="subunit">
    <molecule>RNA-directed RNA polymerase</molecule>
    <text evidence="2">Interacts with Viral protein genome-linked and with protein 3CD.</text>
</comment>
<comment type="subcellular location">
    <molecule>Capsid protein VP0</molecule>
    <subcellularLocation>
        <location>Virion</location>
    </subcellularLocation>
    <subcellularLocation>
        <location evidence="12">Host cytoplasm</location>
    </subcellularLocation>
</comment>
<comment type="subcellular location">
    <molecule>Capsid protein VP4</molecule>
    <subcellularLocation>
        <location>Virion</location>
    </subcellularLocation>
</comment>
<comment type="subcellular location">
    <molecule>Capsid protein VP2</molecule>
    <subcellularLocation>
        <location evidence="2">Virion</location>
    </subcellularLocation>
    <subcellularLocation>
        <location evidence="12">Host cytoplasm</location>
    </subcellularLocation>
</comment>
<comment type="subcellular location">
    <molecule>Capsid protein VP3</molecule>
    <subcellularLocation>
        <location evidence="2">Virion</location>
    </subcellularLocation>
    <subcellularLocation>
        <location evidence="12">Host cytoplasm</location>
    </subcellularLocation>
</comment>
<comment type="subcellular location">
    <molecule>Capsid protein VP1</molecule>
    <subcellularLocation>
        <location evidence="2">Virion</location>
    </subcellularLocation>
    <subcellularLocation>
        <location evidence="12">Host cytoplasm</location>
    </subcellularLocation>
</comment>
<comment type="subcellular location">
    <molecule>Protein 2B</molecule>
    <subcellularLocation>
        <location evidence="12">Host cytoplasmic vesicle membrane</location>
        <topology evidence="12">Peripheral membrane protein</topology>
        <orientation evidence="12">Cytoplasmic side</orientation>
    </subcellularLocation>
    <text>Probably localizes to the surface of intracellular membrane vesicles that are induced after virus infection as the site for viral RNA replication. These vesicles are derived from the endoplasmic reticulum.</text>
</comment>
<comment type="subcellular location">
    <molecule>Protein 2C</molecule>
    <subcellularLocation>
        <location evidence="12">Host cytoplasmic vesicle membrane</location>
        <topology evidence="12">Peripheral membrane protein</topology>
        <orientation evidence="12">Cytoplasmic side</orientation>
    </subcellularLocation>
    <text>Probably localizes to the surface of intracellular membrane vesicles that are induced after virus infection as the site for viral RNA replication. These vesicles are derived from the endoplasmic reticulum.</text>
</comment>
<comment type="subcellular location">
    <molecule>Protein 3A</molecule>
    <subcellularLocation>
        <location evidence="12">Host cytoplasmic vesicle membrane</location>
        <topology evidence="12">Peripheral membrane protein</topology>
        <orientation evidence="12">Cytoplasmic side</orientation>
    </subcellularLocation>
    <text>Probably localizes to the surface of intracellular membrane vesicles that are induced after virus infection as the site for viral RNA replication. These vesicles are derived from the endoplasmic reticulum.</text>
</comment>
<comment type="subcellular location">
    <molecule>Protein 3AB</molecule>
    <subcellularLocation>
        <location evidence="12">Host cytoplasmic vesicle membrane</location>
        <topology evidence="12">Peripheral membrane protein</topology>
        <orientation evidence="12">Cytoplasmic side</orientation>
    </subcellularLocation>
    <text>Probably localizes to the surface of intracellular membrane vesicles that are induced after virus infection as the site for viral RNA replication. These vesicles are derived from the endoplasmic reticulum.</text>
</comment>
<comment type="subcellular location">
    <molecule>Viral protein genome-linked</molecule>
    <subcellularLocation>
        <location evidence="2">Virion</location>
    </subcellularLocation>
    <subcellularLocation>
        <location evidence="6">Host cytoplasm</location>
    </subcellularLocation>
</comment>
<comment type="subcellular location">
    <molecule>Protease 3C</molecule>
    <subcellularLocation>
        <location>Host cytoplasm</location>
    </subcellularLocation>
</comment>
<comment type="subcellular location">
    <molecule>Protein 3CD</molecule>
    <subcellularLocation>
        <location evidence="2">Host nucleus</location>
    </subcellularLocation>
    <subcellularLocation>
        <location evidence="2">Host cytoplasm</location>
    </subcellularLocation>
    <subcellularLocation>
        <location evidence="12">Host cytoplasmic vesicle membrane</location>
        <topology evidence="12">Peripheral membrane protein</topology>
        <orientation evidence="12">Cytoplasmic side</orientation>
    </subcellularLocation>
    <text>Probably localizes to the surface of intracellular membrane vesicles that are induced after virus infection as the site for viral RNA replication. These vesicles are derived from the endoplasmic reticulum.</text>
</comment>
<comment type="subcellular location">
    <molecule>RNA-directed RNA polymerase</molecule>
    <subcellularLocation>
        <location evidence="12">Host cytoplasmic vesicle membrane</location>
        <topology evidence="12">Peripheral membrane protein</topology>
        <orientation evidence="12">Cytoplasmic side</orientation>
    </subcellularLocation>
    <text>Probably localizes to the surface of intracellular membrane vesicles that are induced after virus infection as the site for viral RNA replication. These vesicles are derived from the endoplasmic reticulum.</text>
</comment>
<comment type="domain">
    <molecule>Protein 2C</molecule>
    <text evidence="1 2">The N-terminus has membrane-binding (By similarity). The N-terminus also displays RNA-binding properties (By similarity). The N-terminus is involved in oligomerization (By similarity). The central part contains an ATPase domain and a degenerate C4-type zinc-finger with only 3 cysteines (By similarity). The C-terminus is involved in RNA-binding (By similarity). The extreme C-terminus contains a region involved in oligomerization (By similarity).</text>
</comment>
<comment type="PTM">
    <molecule>Genome polyprotein</molecule>
    <text evidence="2">Specific enzymatic cleavages in vivo by the viral proteases yield processing intermediates and the mature proteins.</text>
</comment>
<comment type="PTM">
    <molecule>Capsid protein VP0</molecule>
    <text evidence="2">Myristoylation is required for the formation of pentamers during virus assembly. Further assembly of 12 pentamers and a molecule of genomic RNA generates the provirion.</text>
</comment>
<comment type="PTM">
    <molecule>Capsid protein VP0</molecule>
    <text evidence="2">During virion maturation, immature virions are rendered infectious following cleavage of VP0 into VP4 and VP2. This maturation seems to be an autocatalytic event triggered by the presence of RNA in the capsid and it is followed by a conformational change infectious virion.</text>
</comment>
<comment type="PTM">
    <molecule>Capsid protein VP4</molecule>
    <text evidence="2">Myristoylation is required during RNA encapsidation and formation of the mature virus particle.</text>
</comment>
<comment type="PTM">
    <molecule>Viral protein genome-linked</molecule>
    <text evidence="2">VPg is uridylylated by the polymerase into VPg-pUpU. This acts as a nucleotide-peptide primer for the genomic RNA replication.</text>
</comment>
<comment type="similarity">
    <text evidence="12">Belongs to the picornaviruses polyprotein family.</text>
</comment>
<comment type="online information" name="Virus Particle ExploreR db">
    <link uri="https://viperdb.org/Info_Page.php?VDB=1aym"/>
    <text>Icosahedral capsid structure at high resolution</text>
</comment>
<comment type="online information" name="Virus Particle ExploreR db">
    <link uri="https://viperdb.org/Info_Page.php?VDB=1ayn"/>
    <text>Icosahedral capsid structure</text>
</comment>
<comment type="online information" name="Virus Particle ExploreR db">
    <link uri="https://viperdb.org/Info_Page.php?VDB=1c8m"/>
    <text>Icosahedral capsid structure in complex with antiviral drug VP63843 (pleconaril)</text>
</comment>
<comment type="online information" name="Virus Particle ExploreR db">
    <link uri="https://viperdb.org/Info_Page.php?VDB=1d3e"/>
    <text>Icosahedral capsid structure in complex with a two-domain fragment of its cellular receptor ICAM1</text>
</comment>
<comment type="online information" name="Virus Particle ExploreR db">
    <link uri="https://viperdb.org/Info_Page.php?VDB=1ncr"/>
    <text>Icosahedral capsid structure in complex with antiviral compound pleconaril</text>
</comment>
<comment type="online information" name="Virus Particle ExploreR db">
    <link uri="https://viperdb.org/Info_Page.php?VDB=1nd2"/>
    <text>Icosahedral capsid structure</text>
</comment>
<comment type="online information" name="Virus Particle ExploreR db">
    <link uri="https://viperdb.org/Info_Page.php?VDB=1nd3"/>
    <text>Icosahedral capsid structure in complex with antiviral compound pleconaril</text>
</comment>
<comment type="online information" name="Virus Particle ExploreR db">
    <link uri="https://viperdb.org/Info_Page.php?VDB=1qju"/>
    <text>Icosahedral capsid structure in complex with antiviral compound VP61209</text>
</comment>
<comment type="online information" name="Virus Particle ExploreR db">
    <link uri="https://viperdb.org/Info_Page.php?VDB=1qjx"/>
    <text>Icosahedral capsid structure in complex with antiviral compound WIN68934</text>
</comment>
<comment type="online information" name="Virus Particle ExploreR db">
    <link uri="https://viperdb.org/Info_Page.php?VDB=1qjy"/>
    <text>Icosahedral capsid structure in complex with antiviral compound VP65099</text>
</comment>
<dbReference type="EC" id="3.4.22.29" evidence="2"/>
<dbReference type="EC" id="3.6.1.15" evidence="2"/>
<dbReference type="EC" id="3.4.22.28" evidence="10"/>
<dbReference type="EC" id="2.7.7.48" evidence="8"/>
<dbReference type="EMBL" id="L24917">
    <property type="protein sequence ID" value="AAA69862.1"/>
    <property type="molecule type" value="Genomic_RNA"/>
</dbReference>
<dbReference type="PDB" id="1AYM">
    <property type="method" value="X-ray"/>
    <property type="resolution" value="2.15 A"/>
    <property type="chains" value="1=569-853, 2=70-330, 3=331-568"/>
</dbReference>
<dbReference type="PDB" id="1AYN">
    <property type="method" value="X-ray"/>
    <property type="resolution" value="2.90 A"/>
    <property type="chains" value="1=569-853, 2=70-330, 3=331-568"/>
</dbReference>
<dbReference type="PDB" id="1C8M">
    <property type="method" value="X-ray"/>
    <property type="resolution" value="2.80 A"/>
    <property type="chains" value="1=569-853, 2=79-330, 3=331-568, 4=2-78"/>
</dbReference>
<dbReference type="PDB" id="1D3E">
    <property type="method" value="EM"/>
    <property type="resolution" value="28.00 A"/>
    <property type="chains" value="1=570-853, 2=79-330, 3=331-568, 4=2-69"/>
</dbReference>
<dbReference type="PDB" id="1NCR">
    <property type="method" value="X-ray"/>
    <property type="resolution" value="2.70 A"/>
    <property type="chains" value="A=569-853, B=70-330, C=331-568, D=2-69"/>
</dbReference>
<dbReference type="PDB" id="1ND2">
    <property type="method" value="X-ray"/>
    <property type="resolution" value="2.50 A"/>
    <property type="chains" value="A=569-853, B=70-330, C=331-568, D=2-69"/>
</dbReference>
<dbReference type="PDB" id="1ND3">
    <property type="method" value="X-ray"/>
    <property type="resolution" value="2.80 A"/>
    <property type="chains" value="A=569-853, B=70-330, C=331-568, D=2-69"/>
</dbReference>
<dbReference type="PDB" id="1QJU">
    <property type="method" value="X-ray"/>
    <property type="resolution" value="2.80 A"/>
    <property type="chains" value="1=569-853, 2=70-330, 3=331-568, 4=2-69"/>
</dbReference>
<dbReference type="PDB" id="1QJX">
    <property type="method" value="X-ray"/>
    <property type="resolution" value="2.80 A"/>
    <property type="chains" value="1=569-853, 2=70-330, 3=331-568, 4=2-69"/>
</dbReference>
<dbReference type="PDB" id="1QJY">
    <property type="method" value="X-ray"/>
    <property type="resolution" value="2.80 A"/>
    <property type="chains" value="1=569-853, 2=70-330, 3=331-568, 4=2-69"/>
</dbReference>
<dbReference type="PDB" id="1TP7">
    <property type="method" value="X-ray"/>
    <property type="resolution" value="2.40 A"/>
    <property type="chains" value="A/B/C/D=1694-2153"/>
</dbReference>
<dbReference type="PDB" id="1XR7">
    <property type="method" value="X-ray"/>
    <property type="resolution" value="2.30 A"/>
    <property type="chains" value="A/B=1694-2153"/>
</dbReference>
<dbReference type="PDB" id="4K50">
    <property type="method" value="X-ray"/>
    <property type="resolution" value="2.93 A"/>
    <property type="chains" value="A/E/I/M=1694-2153"/>
</dbReference>
<dbReference type="PDBsum" id="1AYM"/>
<dbReference type="PDBsum" id="1AYN"/>
<dbReference type="PDBsum" id="1C8M"/>
<dbReference type="PDBsum" id="1D3E"/>
<dbReference type="PDBsum" id="1NCR"/>
<dbReference type="PDBsum" id="1ND2"/>
<dbReference type="PDBsum" id="1ND3"/>
<dbReference type="PDBsum" id="1QJU"/>
<dbReference type="PDBsum" id="1QJX"/>
<dbReference type="PDBsum" id="1QJY"/>
<dbReference type="PDBsum" id="1TP7"/>
<dbReference type="PDBsum" id="1XR7"/>
<dbReference type="PDBsum" id="4K50"/>
<dbReference type="SMR" id="Q82122"/>
<dbReference type="BindingDB" id="Q82122"/>
<dbReference type="ChEMBL" id="CHEMBL5296"/>
<dbReference type="DrugBank" id="DB08715">
    <property type="generic name" value="2,6-DIMETHYL-1-(3-[3-METHYL-5-ISOXAZOLYL]-PROPANYL)-4-[2-METHYL-4-ISOXAZOLYL]-PHENOL"/>
</dbReference>
<dbReference type="DrugBank" id="DB08713">
    <property type="generic name" value="2,6-DIMETHYL-1-(3-[3-METHYL-5-ISOXAZOLYL]-PROPANYL)-4-[2N-METHYL-2H-TETRAZOL-5-YL]-PHENOL"/>
</dbReference>
<dbReference type="DrugBank" id="DB08714">
    <property type="generic name" value="2,6-DIMETHYL-1-(3-[3-METHYL-5-ISOXAZOLYL]-PROPANYL)-4-[4-METHYL-2H-TETRAZOL-2-YL]-PHENOL"/>
</dbReference>
<dbReference type="DrugBank" id="DB03017">
    <property type="generic name" value="Lauric acid"/>
</dbReference>
<dbReference type="DrugBank" id="DB08231">
    <property type="generic name" value="Myristic acid"/>
</dbReference>
<dbReference type="MEROPS" id="C03.007"/>
<dbReference type="MEROPS" id="N08.001"/>
<dbReference type="BRENDA" id="2.7.7.48">
    <property type="organism ID" value="2703"/>
</dbReference>
<dbReference type="BRENDA" id="3.4.22.28">
    <property type="organism ID" value="2703"/>
</dbReference>
<dbReference type="EvolutionaryTrace" id="Q82122"/>
<dbReference type="Proteomes" id="UP000007680">
    <property type="component" value="Genome"/>
</dbReference>
<dbReference type="GO" id="GO:0044162">
    <property type="term" value="C:host cell cytoplasmic vesicle membrane"/>
    <property type="evidence" value="ECO:0007669"/>
    <property type="project" value="UniProtKB-SubCell"/>
</dbReference>
<dbReference type="GO" id="GO:0042025">
    <property type="term" value="C:host cell nucleus"/>
    <property type="evidence" value="ECO:0007669"/>
    <property type="project" value="UniProtKB-SubCell"/>
</dbReference>
<dbReference type="GO" id="GO:0016020">
    <property type="term" value="C:membrane"/>
    <property type="evidence" value="ECO:0007669"/>
    <property type="project" value="UniProtKB-KW"/>
</dbReference>
<dbReference type="GO" id="GO:0039618">
    <property type="term" value="C:T=pseudo3 icosahedral viral capsid"/>
    <property type="evidence" value="ECO:0007669"/>
    <property type="project" value="UniProtKB-KW"/>
</dbReference>
<dbReference type="GO" id="GO:0005524">
    <property type="term" value="F:ATP binding"/>
    <property type="evidence" value="ECO:0007669"/>
    <property type="project" value="UniProtKB-KW"/>
</dbReference>
<dbReference type="GO" id="GO:0015267">
    <property type="term" value="F:channel activity"/>
    <property type="evidence" value="ECO:0007669"/>
    <property type="project" value="UniProtKB-KW"/>
</dbReference>
<dbReference type="GO" id="GO:0004197">
    <property type="term" value="F:cysteine-type endopeptidase activity"/>
    <property type="evidence" value="ECO:0007669"/>
    <property type="project" value="UniProtKB-EC"/>
</dbReference>
<dbReference type="GO" id="GO:0017111">
    <property type="term" value="F:ribonucleoside triphosphate phosphatase activity"/>
    <property type="evidence" value="ECO:0007669"/>
    <property type="project" value="UniProtKB-EC"/>
</dbReference>
<dbReference type="GO" id="GO:0003723">
    <property type="term" value="F:RNA binding"/>
    <property type="evidence" value="ECO:0007669"/>
    <property type="project" value="UniProtKB-KW"/>
</dbReference>
<dbReference type="GO" id="GO:0003724">
    <property type="term" value="F:RNA helicase activity"/>
    <property type="evidence" value="ECO:0007669"/>
    <property type="project" value="InterPro"/>
</dbReference>
<dbReference type="GO" id="GO:0003968">
    <property type="term" value="F:RNA-directed RNA polymerase activity"/>
    <property type="evidence" value="ECO:0007669"/>
    <property type="project" value="UniProtKB-KW"/>
</dbReference>
<dbReference type="GO" id="GO:0005198">
    <property type="term" value="F:structural molecule activity"/>
    <property type="evidence" value="ECO:0007669"/>
    <property type="project" value="InterPro"/>
</dbReference>
<dbReference type="GO" id="GO:0008270">
    <property type="term" value="F:zinc ion binding"/>
    <property type="evidence" value="ECO:0007669"/>
    <property type="project" value="UniProtKB-KW"/>
</dbReference>
<dbReference type="GO" id="GO:0006260">
    <property type="term" value="P:DNA replication"/>
    <property type="evidence" value="ECO:0007669"/>
    <property type="project" value="UniProtKB-KW"/>
</dbReference>
<dbReference type="GO" id="GO:0006351">
    <property type="term" value="P:DNA-templated transcription"/>
    <property type="evidence" value="ECO:0007669"/>
    <property type="project" value="InterPro"/>
</dbReference>
<dbReference type="GO" id="GO:0075509">
    <property type="term" value="P:endocytosis involved in viral entry into host cell"/>
    <property type="evidence" value="ECO:0007669"/>
    <property type="project" value="UniProtKB-KW"/>
</dbReference>
<dbReference type="GO" id="GO:0034220">
    <property type="term" value="P:monoatomic ion transmembrane transport"/>
    <property type="evidence" value="ECO:0007669"/>
    <property type="project" value="UniProtKB-KW"/>
</dbReference>
<dbReference type="GO" id="GO:0006508">
    <property type="term" value="P:proteolysis"/>
    <property type="evidence" value="ECO:0007669"/>
    <property type="project" value="UniProtKB-KW"/>
</dbReference>
<dbReference type="GO" id="GO:0044694">
    <property type="term" value="P:symbiont genome entry into host cell via pore formation in plasma membrane"/>
    <property type="evidence" value="ECO:0007669"/>
    <property type="project" value="UniProtKB-KW"/>
</dbReference>
<dbReference type="GO" id="GO:0039520">
    <property type="term" value="P:symbiont-mediated activation of host autophagy"/>
    <property type="evidence" value="ECO:0000250"/>
    <property type="project" value="UniProtKB"/>
</dbReference>
<dbReference type="GO" id="GO:0039540">
    <property type="term" value="P:symbiont-mediated suppression of host cytoplasmic pattern recognition receptor signaling pathway via inhibition of RIG-I activity"/>
    <property type="evidence" value="ECO:0000314"/>
    <property type="project" value="UniProtKB"/>
</dbReference>
<dbReference type="GO" id="GO:0039522">
    <property type="term" value="P:symbiont-mediated suppression of host mRNA export from nucleus"/>
    <property type="evidence" value="ECO:0007669"/>
    <property type="project" value="UniProtKB-KW"/>
</dbReference>
<dbReference type="GO" id="GO:0039694">
    <property type="term" value="P:viral RNA genome replication"/>
    <property type="evidence" value="ECO:0007669"/>
    <property type="project" value="InterPro"/>
</dbReference>
<dbReference type="GO" id="GO:0019062">
    <property type="term" value="P:virion attachment to host cell"/>
    <property type="evidence" value="ECO:0007669"/>
    <property type="project" value="UniProtKB-KW"/>
</dbReference>
<dbReference type="CDD" id="cd23213">
    <property type="entry name" value="Enterovirus_RdRp"/>
    <property type="match status" value="1"/>
</dbReference>
<dbReference type="CDD" id="cd00205">
    <property type="entry name" value="rhv_like"/>
    <property type="match status" value="3"/>
</dbReference>
<dbReference type="FunFam" id="2.40.10.10:FF:000020">
    <property type="entry name" value="Genome polyprotein"/>
    <property type="match status" value="1"/>
</dbReference>
<dbReference type="FunFam" id="2.60.120.20:FF:000001">
    <property type="entry name" value="Genome polyprotein"/>
    <property type="match status" value="1"/>
</dbReference>
<dbReference type="FunFam" id="2.60.120.20:FF:000002">
    <property type="entry name" value="Genome polyprotein"/>
    <property type="match status" value="1"/>
</dbReference>
<dbReference type="FunFam" id="2.60.120.20:FF:000003">
    <property type="entry name" value="Genome polyprotein"/>
    <property type="match status" value="1"/>
</dbReference>
<dbReference type="Gene3D" id="1.20.960.20">
    <property type="match status" value="1"/>
</dbReference>
<dbReference type="Gene3D" id="2.60.120.20">
    <property type="match status" value="3"/>
</dbReference>
<dbReference type="Gene3D" id="3.30.70.270">
    <property type="match status" value="1"/>
</dbReference>
<dbReference type="Gene3D" id="3.40.50.300">
    <property type="entry name" value="P-loop containing nucleotide triphosphate hydrolases"/>
    <property type="match status" value="1"/>
</dbReference>
<dbReference type="Gene3D" id="6.10.20.20">
    <property type="entry name" value="Poliovirus 3A protein-like"/>
    <property type="match status" value="1"/>
</dbReference>
<dbReference type="Gene3D" id="4.10.880.10">
    <property type="entry name" value="Poliovirus 3D polymerase Domain 1 (Nucleotidyltransferase)"/>
    <property type="match status" value="2"/>
</dbReference>
<dbReference type="Gene3D" id="2.40.10.10">
    <property type="entry name" value="Trypsin-like serine proteases"/>
    <property type="match status" value="4"/>
</dbReference>
<dbReference type="InterPro" id="IPR043502">
    <property type="entry name" value="DNA/RNA_pol_sf"/>
</dbReference>
<dbReference type="InterPro" id="IPR000605">
    <property type="entry name" value="Helicase_SF3_ssDNA/RNA_vir"/>
</dbReference>
<dbReference type="InterPro" id="IPR014759">
    <property type="entry name" value="Helicase_SF3_ssRNA_vir"/>
</dbReference>
<dbReference type="InterPro" id="IPR027417">
    <property type="entry name" value="P-loop_NTPase"/>
</dbReference>
<dbReference type="InterPro" id="IPR014838">
    <property type="entry name" value="P3A"/>
</dbReference>
<dbReference type="InterPro" id="IPR036203">
    <property type="entry name" value="P3A_soluble_dom"/>
</dbReference>
<dbReference type="InterPro" id="IPR044067">
    <property type="entry name" value="PCV_3C_PRO"/>
</dbReference>
<dbReference type="InterPro" id="IPR000081">
    <property type="entry name" value="Peptidase_C3"/>
</dbReference>
<dbReference type="InterPro" id="IPR000199">
    <property type="entry name" value="Peptidase_C3A/C3B_picornavir"/>
</dbReference>
<dbReference type="InterPro" id="IPR009003">
    <property type="entry name" value="Peptidase_S1_PA"/>
</dbReference>
<dbReference type="InterPro" id="IPR043504">
    <property type="entry name" value="Peptidase_S1_PA_chymotrypsin"/>
</dbReference>
<dbReference type="InterPro" id="IPR003138">
    <property type="entry name" value="Pico_P1A"/>
</dbReference>
<dbReference type="InterPro" id="IPR002527">
    <property type="entry name" value="Pico_P2B"/>
</dbReference>
<dbReference type="InterPro" id="IPR001676">
    <property type="entry name" value="Picornavirus_capsid"/>
</dbReference>
<dbReference type="InterPro" id="IPR043128">
    <property type="entry name" value="Rev_trsase/Diguanyl_cyclase"/>
</dbReference>
<dbReference type="InterPro" id="IPR033703">
    <property type="entry name" value="Rhv-like"/>
</dbReference>
<dbReference type="InterPro" id="IPR001205">
    <property type="entry name" value="RNA-dir_pol_C"/>
</dbReference>
<dbReference type="InterPro" id="IPR007094">
    <property type="entry name" value="RNA-dir_pol_PSvirus"/>
</dbReference>
<dbReference type="InterPro" id="IPR029053">
    <property type="entry name" value="Viral_coat"/>
</dbReference>
<dbReference type="Pfam" id="PF08727">
    <property type="entry name" value="P3A"/>
    <property type="match status" value="1"/>
</dbReference>
<dbReference type="Pfam" id="PF00548">
    <property type="entry name" value="Peptidase_C3"/>
    <property type="match status" value="1"/>
</dbReference>
<dbReference type="Pfam" id="PF02226">
    <property type="entry name" value="Pico_P1A"/>
    <property type="match status" value="1"/>
</dbReference>
<dbReference type="Pfam" id="PF00947">
    <property type="entry name" value="Pico_P2A"/>
    <property type="match status" value="1"/>
</dbReference>
<dbReference type="Pfam" id="PF01552">
    <property type="entry name" value="Pico_P2B"/>
    <property type="match status" value="1"/>
</dbReference>
<dbReference type="Pfam" id="PF00680">
    <property type="entry name" value="RdRP_1"/>
    <property type="match status" value="1"/>
</dbReference>
<dbReference type="Pfam" id="PF00073">
    <property type="entry name" value="Rhv"/>
    <property type="match status" value="3"/>
</dbReference>
<dbReference type="Pfam" id="PF00910">
    <property type="entry name" value="RNA_helicase"/>
    <property type="match status" value="1"/>
</dbReference>
<dbReference type="SUPFAM" id="SSF56672">
    <property type="entry name" value="DNA/RNA polymerases"/>
    <property type="match status" value="1"/>
</dbReference>
<dbReference type="SUPFAM" id="SSF52540">
    <property type="entry name" value="P-loop containing nucleoside triphosphate hydrolases"/>
    <property type="match status" value="1"/>
</dbReference>
<dbReference type="SUPFAM" id="SSF88633">
    <property type="entry name" value="Positive stranded ssRNA viruses"/>
    <property type="match status" value="2"/>
</dbReference>
<dbReference type="SUPFAM" id="SSF89043">
    <property type="entry name" value="Soluble domain of poliovirus core protein 3a"/>
    <property type="match status" value="1"/>
</dbReference>
<dbReference type="SUPFAM" id="SSF50494">
    <property type="entry name" value="Trypsin-like serine proteases"/>
    <property type="match status" value="2"/>
</dbReference>
<dbReference type="PROSITE" id="PS51874">
    <property type="entry name" value="PCV_3C_PRO"/>
    <property type="match status" value="1"/>
</dbReference>
<dbReference type="PROSITE" id="PS50507">
    <property type="entry name" value="RDRP_SSRNA_POS"/>
    <property type="match status" value="1"/>
</dbReference>
<dbReference type="PROSITE" id="PS51218">
    <property type="entry name" value="SF3_HELICASE_2"/>
    <property type="match status" value="1"/>
</dbReference>
<keyword id="KW-0002">3D-structure</keyword>
<keyword id="KW-1072">Activation of host autophagy by virus</keyword>
<keyword id="KW-0067">ATP-binding</keyword>
<keyword id="KW-0068">Autocatalytic cleavage</keyword>
<keyword id="KW-0167">Capsid protein</keyword>
<keyword id="KW-0191">Covalent protein-RNA linkage</keyword>
<keyword id="KW-0235">DNA replication</keyword>
<keyword id="KW-1262">Eukaryotic host gene expression shutoff by virus</keyword>
<keyword id="KW-1193">Eukaryotic host translation shutoff by virus</keyword>
<keyword id="KW-0347">Helicase</keyword>
<keyword id="KW-1035">Host cytoplasm</keyword>
<keyword id="KW-1036">Host cytoplasmic vesicle</keyword>
<keyword id="KW-1190">Host gene expression shutoff by virus</keyword>
<keyword id="KW-1043">Host membrane</keyword>
<keyword id="KW-1192">Host mRNA suppression by virus</keyword>
<keyword id="KW-1048">Host nucleus</keyword>
<keyword id="KW-0945">Host-virus interaction</keyword>
<keyword id="KW-0378">Hydrolase</keyword>
<keyword id="KW-1090">Inhibition of host innate immune response by virus</keyword>
<keyword id="KW-1099">Inhibition of host mRNA nuclear export by virus</keyword>
<keyword id="KW-1088">Inhibition of host RIG-I by virus</keyword>
<keyword id="KW-1113">Inhibition of host RLR pathway by virus</keyword>
<keyword id="KW-0407">Ion channel</keyword>
<keyword id="KW-0406">Ion transport</keyword>
<keyword id="KW-0449">Lipoprotein</keyword>
<keyword id="KW-0460">Magnesium</keyword>
<keyword id="KW-0472">Membrane</keyword>
<keyword id="KW-0479">Metal-binding</keyword>
<keyword id="KW-0519">Myristate</keyword>
<keyword id="KW-0547">Nucleotide-binding</keyword>
<keyword id="KW-0548">Nucleotidyltransferase</keyword>
<keyword id="KW-0597">Phosphoprotein</keyword>
<keyword id="KW-1172">Pore-mediated penetration of viral genome into host cell</keyword>
<keyword id="KW-0645">Protease</keyword>
<keyword id="KW-0677">Repeat</keyword>
<keyword id="KW-0694">RNA-binding</keyword>
<keyword id="KW-0696">RNA-directed RNA polymerase</keyword>
<keyword id="KW-1143">T=pseudo3 icosahedral capsid protein</keyword>
<keyword id="KW-0788">Thiol protease</keyword>
<keyword id="KW-0808">Transferase</keyword>
<keyword id="KW-0813">Transport</keyword>
<keyword id="KW-1161">Viral attachment to host cell</keyword>
<keyword id="KW-0899">Viral immunoevasion</keyword>
<keyword id="KW-1182">Viral ion channel</keyword>
<keyword id="KW-1162">Viral penetration into host cytoplasm</keyword>
<keyword id="KW-0693">Viral RNA replication</keyword>
<keyword id="KW-0946">Virion</keyword>
<keyword id="KW-1164">Virus endocytosis by host</keyword>
<keyword id="KW-1160">Virus entry into host cell</keyword>
<keyword id="KW-0862">Zinc</keyword>
<keyword id="KW-0863">Zinc-finger</keyword>
<evidence type="ECO:0000250" key="1">
    <source>
        <dbReference type="UniProtKB" id="B9VUU3"/>
    </source>
</evidence>
<evidence type="ECO:0000250" key="2">
    <source>
        <dbReference type="UniProtKB" id="P03300"/>
    </source>
</evidence>
<evidence type="ECO:0000250" key="3">
    <source>
        <dbReference type="UniProtKB" id="P03301"/>
    </source>
</evidence>
<evidence type="ECO:0000250" key="4">
    <source>
        <dbReference type="UniProtKB" id="P03313"/>
    </source>
</evidence>
<evidence type="ECO:0000250" key="5">
    <source>
        <dbReference type="UniProtKB" id="P04936"/>
    </source>
</evidence>
<evidence type="ECO:0000250" key="6">
    <source>
        <dbReference type="UniProtKB" id="Q66478"/>
    </source>
</evidence>
<evidence type="ECO:0000255" key="7"/>
<evidence type="ECO:0000255" key="8">
    <source>
        <dbReference type="PROSITE-ProRule" id="PRU00539"/>
    </source>
</evidence>
<evidence type="ECO:0000255" key="9">
    <source>
        <dbReference type="PROSITE-ProRule" id="PRU00551"/>
    </source>
</evidence>
<evidence type="ECO:0000255" key="10">
    <source>
        <dbReference type="PROSITE-ProRule" id="PRU01222"/>
    </source>
</evidence>
<evidence type="ECO:0000269" key="11">
    <source>
    </source>
</evidence>
<evidence type="ECO:0000305" key="12"/>
<evidence type="ECO:0007829" key="13">
    <source>
        <dbReference type="PDB" id="1AYM"/>
    </source>
</evidence>
<evidence type="ECO:0007829" key="14">
    <source>
        <dbReference type="PDB" id="1C8M"/>
    </source>
</evidence>
<evidence type="ECO:0007829" key="15">
    <source>
        <dbReference type="PDB" id="1ND2"/>
    </source>
</evidence>
<evidence type="ECO:0007829" key="16">
    <source>
        <dbReference type="PDB" id="1TP7"/>
    </source>
</evidence>
<evidence type="ECO:0007829" key="17">
    <source>
        <dbReference type="PDB" id="1XR7"/>
    </source>
</evidence>
<feature type="initiator methionine" description="Removed; by host" evidence="2">
    <location>
        <position position="1"/>
    </location>
</feature>
<feature type="chain" id="PRO_0000426551" description="Genome polyprotein">
    <location>
        <begin position="2"/>
        <end position="2153"/>
    </location>
</feature>
<feature type="chain" id="PRO_0000426552" description="P1">
    <location>
        <begin position="2"/>
        <end position="853"/>
    </location>
</feature>
<feature type="chain" id="PRO_0000426553" description="Capsid protein VP0">
    <location>
        <begin position="2"/>
        <end position="330"/>
    </location>
</feature>
<feature type="chain" id="PRO_0000426554" description="Capsid protein VP4">
    <location>
        <begin position="2"/>
        <end position="69"/>
    </location>
</feature>
<feature type="chain" id="PRO_0000426555" description="Capsid protein VP2">
    <location>
        <begin position="70"/>
        <end position="330"/>
    </location>
</feature>
<feature type="chain" id="PRO_0000426556" description="Capsid protein VP3">
    <location>
        <begin position="331"/>
        <end position="562"/>
    </location>
</feature>
<feature type="chain" id="PRO_0000426557" description="Capsid protein VP1">
    <location>
        <begin position="563"/>
        <end position="853"/>
    </location>
</feature>
<feature type="chain" id="PRO_0000426558" description="P2">
    <location>
        <begin position="854"/>
        <end position="1412"/>
    </location>
</feature>
<feature type="chain" id="PRO_0000426559" description="Protease 2A">
    <location>
        <begin position="854"/>
        <end position="995"/>
    </location>
</feature>
<feature type="chain" id="PRO_0000040041" description="Protein 2B">
    <location>
        <begin position="996"/>
        <end position="1090"/>
    </location>
</feature>
<feature type="chain" id="PRO_0000040042" description="Protein 2C">
    <location>
        <begin position="1091"/>
        <end position="1412"/>
    </location>
</feature>
<feature type="chain" id="PRO_0000426560" description="P3">
    <location>
        <begin position="1413"/>
        <end position="2153"/>
    </location>
</feature>
<feature type="chain" id="PRO_0000426561" description="Protein 3AB">
    <location>
        <begin position="1413"/>
        <end position="1510"/>
    </location>
</feature>
<feature type="chain" id="PRO_0000040043" description="Protein 3A">
    <location>
        <begin position="1413"/>
        <end position="1489"/>
    </location>
</feature>
<feature type="chain" id="PRO_0000426562" description="Viral protein genome-linked">
    <location>
        <begin position="1490"/>
        <end position="1510"/>
    </location>
</feature>
<feature type="chain" id="PRO_0000426563" description="Protein 3CD">
    <location>
        <begin position="1511"/>
        <end position="2153"/>
    </location>
</feature>
<feature type="chain" id="PRO_0000426564" description="Protease 3C">
    <location>
        <begin position="1511"/>
        <end position="1693"/>
    </location>
</feature>
<feature type="chain" id="PRO_0000426565" description="RNA-directed RNA polymerase">
    <location>
        <begin position="1694"/>
        <end position="2153"/>
    </location>
</feature>
<feature type="topological domain" description="Cytoplasmic" evidence="7">
    <location>
        <begin position="2"/>
        <end position="1466"/>
    </location>
</feature>
<feature type="intramembrane region" evidence="7">
    <location>
        <begin position="1467"/>
        <end position="1482"/>
    </location>
</feature>
<feature type="topological domain" description="Cytoplasmic" evidence="7">
    <location>
        <begin position="1483"/>
        <end position="2153"/>
    </location>
</feature>
<feature type="domain" description="SF3 helicase" evidence="9">
    <location>
        <begin position="1186"/>
        <end position="1346"/>
    </location>
</feature>
<feature type="domain" description="Peptidase C3" evidence="10">
    <location>
        <begin position="1511"/>
        <end position="1689"/>
    </location>
</feature>
<feature type="domain" description="RdRp catalytic" evidence="8">
    <location>
        <begin position="1921"/>
        <end position="2034"/>
    </location>
</feature>
<feature type="zinc finger region" description="C4-type; degenerate" evidence="1">
    <location>
        <begin position="1353"/>
        <end position="1369"/>
    </location>
</feature>
<feature type="region of interest" description="Amphipathic alpha-helix" evidence="7">
    <location>
        <begin position="565"/>
        <end position="582"/>
    </location>
</feature>
<feature type="region of interest" description="Oligomerization" evidence="2">
    <location>
        <begin position="1091"/>
        <end position="1224"/>
    </location>
</feature>
<feature type="region of interest" description="Membrane-binding" evidence="2">
    <location>
        <begin position="1091"/>
        <end position="1160"/>
    </location>
</feature>
<feature type="region of interest" description="RNA-binding" evidence="2">
    <location>
        <begin position="1112"/>
        <end position="1116"/>
    </location>
</feature>
<feature type="region of interest" description="RNA-binding" evidence="2">
    <location>
        <begin position="1396"/>
        <end position="1403"/>
    </location>
</feature>
<feature type="region of interest" description="Oligomerization" evidence="2">
    <location>
        <begin position="1407"/>
        <end position="1412"/>
    </location>
</feature>
<feature type="active site" description="For protease 2A activity" evidence="2">
    <location>
        <position position="871"/>
    </location>
</feature>
<feature type="active site" description="For protease 2A activity" evidence="2">
    <location>
        <position position="888"/>
    </location>
</feature>
<feature type="active site" description="For protease 2A activity" evidence="2">
    <location>
        <position position="959"/>
    </location>
</feature>
<feature type="active site" description="For protease 3C activity" evidence="10">
    <location>
        <position position="1550"/>
    </location>
</feature>
<feature type="active site" description="For protease 3C activity" evidence="10">
    <location>
        <position position="1581"/>
    </location>
</feature>
<feature type="active site" description="For protease 3C activity" evidence="10">
    <location>
        <position position="1657"/>
    </location>
</feature>
<feature type="binding site" evidence="5">
    <location>
        <position position="905"/>
    </location>
    <ligand>
        <name>Zn(2+)</name>
        <dbReference type="ChEBI" id="CHEBI:29105"/>
        <label>1</label>
        <note>structural</note>
    </ligand>
</feature>
<feature type="binding site" evidence="5">
    <location>
        <position position="907"/>
    </location>
    <ligand>
        <name>Zn(2+)</name>
        <dbReference type="ChEBI" id="CHEBI:29105"/>
        <label>1</label>
        <note>structural</note>
    </ligand>
</feature>
<feature type="binding site" evidence="5">
    <location>
        <position position="965"/>
    </location>
    <ligand>
        <name>Zn(2+)</name>
        <dbReference type="ChEBI" id="CHEBI:29105"/>
        <label>1</label>
        <note>structural</note>
    </ligand>
</feature>
<feature type="binding site" evidence="5">
    <location>
        <position position="967"/>
    </location>
    <ligand>
        <name>Zn(2+)</name>
        <dbReference type="ChEBI" id="CHEBI:29105"/>
        <label>1</label>
        <note>structural</note>
    </ligand>
</feature>
<feature type="binding site" evidence="1">
    <location>
        <position position="1353"/>
    </location>
    <ligand>
        <name>Zn(2+)</name>
        <dbReference type="ChEBI" id="CHEBI:29105"/>
        <label>2</label>
    </ligand>
</feature>
<feature type="binding site" evidence="1">
    <location>
        <position position="1364"/>
    </location>
    <ligand>
        <name>Zn(2+)</name>
        <dbReference type="ChEBI" id="CHEBI:29105"/>
        <label>2</label>
    </ligand>
</feature>
<feature type="binding site" evidence="1">
    <location>
        <position position="1369"/>
    </location>
    <ligand>
        <name>Zn(2+)</name>
        <dbReference type="ChEBI" id="CHEBI:29105"/>
        <label>2</label>
    </ligand>
</feature>
<feature type="binding site" evidence="2">
    <location>
        <position position="1927"/>
    </location>
    <ligand>
        <name>Mg(2+)</name>
        <dbReference type="ChEBI" id="CHEBI:18420"/>
        <label>1</label>
        <note>catalytic; for RdRp activity</note>
    </ligand>
</feature>
<feature type="binding site" evidence="2">
    <location>
        <position position="1927"/>
    </location>
    <ligand>
        <name>Mg(2+)</name>
        <dbReference type="ChEBI" id="CHEBI:18420"/>
        <label>2</label>
        <note>catalytic; for RdRp activity</note>
    </ligand>
</feature>
<feature type="binding site" evidence="2">
    <location>
        <position position="2020"/>
    </location>
    <ligand>
        <name>Mg(2+)</name>
        <dbReference type="ChEBI" id="CHEBI:18420"/>
        <label>1</label>
        <note>catalytic; for RdRp activity</note>
    </ligand>
</feature>
<feature type="binding site" evidence="2">
    <location>
        <position position="2020"/>
    </location>
    <ligand>
        <name>Mg(2+)</name>
        <dbReference type="ChEBI" id="CHEBI:18420"/>
        <label>2</label>
        <note>catalytic; for RdRp activity</note>
    </ligand>
</feature>
<feature type="site" description="Cleavage; by autolysis" evidence="2">
    <location>
        <begin position="69"/>
        <end position="70"/>
    </location>
</feature>
<feature type="site" description="Cleavage; by protease 3C" evidence="3">
    <location>
        <begin position="330"/>
        <end position="331"/>
    </location>
</feature>
<feature type="site" description="Cleavage; by autolysis" evidence="3">
    <location>
        <begin position="853"/>
        <end position="854"/>
    </location>
</feature>
<feature type="site" description="Cleavage; by protease 3C" evidence="3">
    <location>
        <begin position="995"/>
        <end position="996"/>
    </location>
</feature>
<feature type="site" description="Cleavage; by protease 3C" evidence="3">
    <location>
        <begin position="1090"/>
        <end position="1091"/>
    </location>
</feature>
<feature type="site" description="Involved in the interaction with host RTN3" evidence="6">
    <location>
        <position position="1115"/>
    </location>
</feature>
<feature type="site" description="Cleavage; by protease 3C" evidence="3">
    <location>
        <begin position="1412"/>
        <end position="1413"/>
    </location>
</feature>
<feature type="site" description="Cleavage; by protease 3C" evidence="3">
    <location>
        <begin position="1489"/>
        <end position="1490"/>
    </location>
</feature>
<feature type="site" description="Cleavage; by protease 3C" evidence="3">
    <location>
        <begin position="1510"/>
        <end position="1511"/>
    </location>
</feature>
<feature type="site" description="Cleavage; by protease 3C" evidence="3">
    <location>
        <begin position="1693"/>
        <end position="1694"/>
    </location>
</feature>
<feature type="modified residue" description="O-(5'-phospho-RNA)-tyrosine" evidence="2">
    <location>
        <position position="1492"/>
    </location>
</feature>
<feature type="lipid moiety-binding region" description="N-myristoyl glycine; by host" evidence="2">
    <location>
        <position position="2"/>
    </location>
</feature>
<feature type="sequence conflict" description="In Ref. 1; AAA69862." evidence="12" ref="1">
    <original>KD</original>
    <variation>NH</variation>
    <location>
        <begin position="547"/>
        <end position="548"/>
    </location>
</feature>
<feature type="strand" evidence="15">
    <location>
        <begin position="3"/>
        <end position="5"/>
    </location>
</feature>
<feature type="strand" evidence="15">
    <location>
        <begin position="28"/>
        <end position="30"/>
    </location>
</feature>
<feature type="strand" evidence="15">
    <location>
        <begin position="33"/>
        <end position="35"/>
    </location>
</feature>
<feature type="helix" evidence="15">
    <location>
        <begin position="36"/>
        <end position="38"/>
    </location>
</feature>
<feature type="strand" evidence="13">
    <location>
        <begin position="83"/>
        <end position="87"/>
    </location>
</feature>
<feature type="strand" evidence="13">
    <location>
        <begin position="90"/>
        <end position="96"/>
    </location>
</feature>
<feature type="helix" evidence="13">
    <location>
        <begin position="103"/>
        <end position="105"/>
    </location>
</feature>
<feature type="turn" evidence="13">
    <location>
        <begin position="113"/>
        <end position="115"/>
    </location>
</feature>
<feature type="helix" evidence="13">
    <location>
        <begin position="126"/>
        <end position="128"/>
    </location>
</feature>
<feature type="strand" evidence="13">
    <location>
        <begin position="138"/>
        <end position="140"/>
    </location>
</feature>
<feature type="strand" evidence="13">
    <location>
        <begin position="147"/>
        <end position="151"/>
    </location>
</feature>
<feature type="helix" evidence="13">
    <location>
        <begin position="153"/>
        <end position="155"/>
    </location>
</feature>
<feature type="helix" evidence="13">
    <location>
        <begin position="159"/>
        <end position="167"/>
    </location>
</feature>
<feature type="strand" evidence="13">
    <location>
        <begin position="168"/>
        <end position="180"/>
    </location>
</feature>
<feature type="strand" evidence="13">
    <location>
        <begin position="188"/>
        <end position="197"/>
    </location>
</feature>
<feature type="strand" evidence="13">
    <location>
        <begin position="204"/>
        <end position="206"/>
    </location>
</feature>
<feature type="helix" evidence="13">
    <location>
        <begin position="213"/>
        <end position="216"/>
    </location>
</feature>
<feature type="helix" evidence="13">
    <location>
        <begin position="219"/>
        <end position="221"/>
    </location>
</feature>
<feature type="turn" evidence="13">
    <location>
        <begin position="225"/>
        <end position="227"/>
    </location>
</feature>
<feature type="helix" evidence="13">
    <location>
        <begin position="239"/>
        <end position="241"/>
    </location>
</feature>
<feature type="turn" evidence="13">
    <location>
        <begin position="242"/>
        <end position="245"/>
    </location>
</feature>
<feature type="helix" evidence="13">
    <location>
        <begin position="248"/>
        <end position="253"/>
    </location>
</feature>
<feature type="strand" evidence="13">
    <location>
        <begin position="254"/>
        <end position="260"/>
    </location>
</feature>
<feature type="turn" evidence="13">
    <location>
        <begin position="261"/>
        <end position="263"/>
    </location>
</feature>
<feature type="strand" evidence="13">
    <location>
        <begin position="265"/>
        <end position="271"/>
    </location>
</feature>
<feature type="strand" evidence="13">
    <location>
        <begin position="276"/>
        <end position="280"/>
    </location>
</feature>
<feature type="turn" evidence="13">
    <location>
        <begin position="282"/>
        <end position="284"/>
    </location>
</feature>
<feature type="strand" evidence="13">
    <location>
        <begin position="288"/>
        <end position="299"/>
    </location>
</feature>
<feature type="strand" evidence="13">
    <location>
        <begin position="307"/>
        <end position="323"/>
    </location>
</feature>
<feature type="turn" evidence="13">
    <location>
        <begin position="338"/>
        <end position="341"/>
    </location>
</feature>
<feature type="strand" evidence="13">
    <location>
        <begin position="353"/>
        <end position="355"/>
    </location>
</feature>
<feature type="strand" evidence="15">
    <location>
        <begin position="369"/>
        <end position="372"/>
    </location>
</feature>
<feature type="helix" evidence="13">
    <location>
        <begin position="374"/>
        <end position="377"/>
    </location>
</feature>
<feature type="turn" evidence="13">
    <location>
        <begin position="389"/>
        <end position="393"/>
    </location>
</feature>
<feature type="helix" evidence="13">
    <location>
        <begin position="395"/>
        <end position="398"/>
    </location>
</feature>
<feature type="strand" evidence="13">
    <location>
        <begin position="399"/>
        <end position="402"/>
    </location>
</feature>
<feature type="strand" evidence="14">
    <location>
        <begin position="406"/>
        <end position="409"/>
    </location>
</feature>
<feature type="strand" evidence="13">
    <location>
        <begin position="411"/>
        <end position="416"/>
    </location>
</feature>
<feature type="turn" evidence="13">
    <location>
        <begin position="422"/>
        <end position="426"/>
    </location>
</feature>
<feature type="helix" evidence="13">
    <location>
        <begin position="428"/>
        <end position="433"/>
    </location>
</feature>
<feature type="strand" evidence="13">
    <location>
        <begin position="436"/>
        <end position="441"/>
    </location>
</feature>
<feature type="strand" evidence="13">
    <location>
        <begin position="443"/>
        <end position="449"/>
    </location>
</feature>
<feature type="strand" evidence="13">
    <location>
        <begin position="458"/>
        <end position="464"/>
    </location>
</feature>
<feature type="strand" evidence="13">
    <location>
        <begin position="466"/>
        <end position="468"/>
    </location>
</feature>
<feature type="helix" evidence="13">
    <location>
        <begin position="474"/>
        <end position="478"/>
    </location>
</feature>
<feature type="strand" evidence="13">
    <location>
        <begin position="480"/>
        <end position="486"/>
    </location>
</feature>
<feature type="strand" evidence="13">
    <location>
        <begin position="488"/>
        <end position="490"/>
    </location>
</feature>
<feature type="strand" evidence="13">
    <location>
        <begin position="492"/>
        <end position="497"/>
    </location>
</feature>
<feature type="strand" evidence="13">
    <location>
        <begin position="502"/>
        <end position="504"/>
    </location>
</feature>
<feature type="strand" evidence="13">
    <location>
        <begin position="506"/>
        <end position="509"/>
    </location>
</feature>
<feature type="helix" evidence="15">
    <location>
        <begin position="512"/>
        <end position="514"/>
    </location>
</feature>
<feature type="strand" evidence="13">
    <location>
        <begin position="518"/>
        <end position="525"/>
    </location>
</feature>
<feature type="strand" evidence="13">
    <location>
        <begin position="537"/>
        <end position="545"/>
    </location>
</feature>
<feature type="strand" evidence="13">
    <location>
        <begin position="550"/>
        <end position="554"/>
    </location>
</feature>
<feature type="helix" evidence="13">
    <location>
        <begin position="570"/>
        <end position="579"/>
    </location>
</feature>
<feature type="strand" evidence="13">
    <location>
        <begin position="582"/>
        <end position="584"/>
    </location>
</feature>
<feature type="helix" evidence="13">
    <location>
        <begin position="605"/>
        <end position="607"/>
    </location>
</feature>
<feature type="helix" evidence="13">
    <location>
        <begin position="615"/>
        <end position="618"/>
    </location>
</feature>
<feature type="helix" evidence="13">
    <location>
        <begin position="631"/>
        <end position="633"/>
    </location>
</feature>
<feature type="helix" evidence="13">
    <location>
        <begin position="635"/>
        <end position="639"/>
    </location>
</feature>
<feature type="strand" evidence="13">
    <location>
        <begin position="643"/>
        <end position="651"/>
    </location>
</feature>
<feature type="helix" evidence="13">
    <location>
        <begin position="656"/>
        <end position="659"/>
    </location>
</feature>
<feature type="strand" evidence="13">
    <location>
        <begin position="660"/>
        <end position="665"/>
    </location>
</feature>
<feature type="helix" evidence="13">
    <location>
        <begin position="672"/>
        <end position="678"/>
    </location>
</feature>
<feature type="strand" evidence="13">
    <location>
        <begin position="681"/>
        <end position="701"/>
    </location>
</feature>
<feature type="strand" evidence="13">
    <location>
        <begin position="707"/>
        <end position="713"/>
    </location>
</feature>
<feature type="helix" evidence="13">
    <location>
        <begin position="726"/>
        <end position="729"/>
    </location>
</feature>
<feature type="strand" evidence="13">
    <location>
        <begin position="731"/>
        <end position="739"/>
    </location>
</feature>
<feature type="strand" evidence="13">
    <location>
        <begin position="746"/>
        <end position="749"/>
    </location>
</feature>
<feature type="strand" evidence="13">
    <location>
        <begin position="754"/>
        <end position="760"/>
    </location>
</feature>
<feature type="strand" evidence="13">
    <location>
        <begin position="764"/>
        <end position="769"/>
    </location>
</feature>
<feature type="turn" evidence="13">
    <location>
        <begin position="776"/>
        <end position="779"/>
    </location>
</feature>
<feature type="strand" evidence="13">
    <location>
        <begin position="784"/>
        <end position="789"/>
    </location>
</feature>
<feature type="strand" evidence="13">
    <location>
        <begin position="798"/>
        <end position="816"/>
    </location>
</feature>
<feature type="helix" evidence="13">
    <location>
        <begin position="838"/>
        <end position="840"/>
    </location>
</feature>
<feature type="strand" evidence="13">
    <location>
        <begin position="847"/>
        <end position="849"/>
    </location>
</feature>
<feature type="strand" evidence="17">
    <location>
        <begin position="1695"/>
        <end position="1701"/>
    </location>
</feature>
<feature type="helix" evidence="17">
    <location>
        <begin position="1702"/>
        <end position="1705"/>
    </location>
</feature>
<feature type="turn" evidence="17">
    <location>
        <begin position="1722"/>
        <end position="1726"/>
    </location>
</feature>
<feature type="helix" evidence="17">
    <location>
        <begin position="1747"/>
        <end position="1751"/>
    </location>
</feature>
<feature type="helix" evidence="17">
    <location>
        <begin position="1752"/>
        <end position="1754"/>
    </location>
</feature>
<feature type="helix" evidence="17">
    <location>
        <begin position="1765"/>
        <end position="1779"/>
    </location>
</feature>
<feature type="helix" evidence="17">
    <location>
        <begin position="1790"/>
        <end position="1795"/>
    </location>
</feature>
<feature type="strand" evidence="17">
    <location>
        <begin position="1805"/>
        <end position="1807"/>
    </location>
</feature>
<feature type="turn" evidence="17">
    <location>
        <begin position="1811"/>
        <end position="1817"/>
    </location>
</feature>
<feature type="helix" evidence="17">
    <location>
        <begin position="1820"/>
        <end position="1823"/>
    </location>
</feature>
<feature type="turn" evidence="17">
    <location>
        <begin position="1826"/>
        <end position="1829"/>
    </location>
</feature>
<feature type="helix" evidence="17">
    <location>
        <begin position="1832"/>
        <end position="1841"/>
    </location>
</feature>
<feature type="strand" evidence="17">
    <location>
        <begin position="1847"/>
        <end position="1851"/>
    </location>
</feature>
<feature type="strand" evidence="16">
    <location>
        <begin position="1854"/>
        <end position="1856"/>
    </location>
</feature>
<feature type="helix" evidence="17">
    <location>
        <begin position="1859"/>
        <end position="1862"/>
    </location>
</feature>
<feature type="strand" evidence="17">
    <location>
        <begin position="1868"/>
        <end position="1871"/>
    </location>
</feature>
<feature type="helix" evidence="17">
    <location>
        <begin position="1874"/>
        <end position="1893"/>
    </location>
</feature>
<feature type="turn" evidence="17">
    <location>
        <begin position="1897"/>
        <end position="1900"/>
    </location>
</feature>
<feature type="helix" evidence="17">
    <location>
        <begin position="1907"/>
        <end position="1917"/>
    </location>
</feature>
<feature type="strand" evidence="17">
    <location>
        <begin position="1920"/>
        <end position="1930"/>
    </location>
</feature>
<feature type="helix" evidence="17">
    <location>
        <begin position="1931"/>
        <end position="1934"/>
    </location>
</feature>
<feature type="helix" evidence="17">
    <location>
        <begin position="1937"/>
        <end position="1949"/>
    </location>
</feature>
<feature type="helix" evidence="17">
    <location>
        <begin position="1958"/>
        <end position="1961"/>
    </location>
</feature>
<feature type="strand" evidence="17">
    <location>
        <begin position="1962"/>
        <end position="1967"/>
    </location>
</feature>
<feature type="strand" evidence="17">
    <location>
        <begin position="1970"/>
        <end position="1977"/>
    </location>
</feature>
<feature type="helix" evidence="17">
    <location>
        <begin position="1985"/>
        <end position="2004"/>
    </location>
</feature>
<feature type="helix" evidence="17">
    <location>
        <begin position="2010"/>
        <end position="2012"/>
    </location>
</feature>
<feature type="strand" evidence="17">
    <location>
        <begin position="2014"/>
        <end position="2018"/>
    </location>
</feature>
<feature type="strand" evidence="17">
    <location>
        <begin position="2021"/>
        <end position="2028"/>
    </location>
</feature>
<feature type="helix" evidence="17">
    <location>
        <begin position="2032"/>
        <end position="2037"/>
    </location>
</feature>
<feature type="helix" evidence="17">
    <location>
        <begin position="2038"/>
        <end position="2042"/>
    </location>
</feature>
<feature type="strand" evidence="17">
    <location>
        <begin position="2046"/>
        <end position="2049"/>
    </location>
</feature>
<feature type="turn" evidence="17">
    <location>
        <begin position="2060"/>
        <end position="2062"/>
    </location>
</feature>
<feature type="strand" evidence="17">
    <location>
        <begin position="2068"/>
        <end position="2072"/>
    </location>
</feature>
<feature type="strand" evidence="17">
    <location>
        <begin position="2079"/>
        <end position="2083"/>
    </location>
</feature>
<feature type="helix" evidence="17">
    <location>
        <begin position="2086"/>
        <end position="2093"/>
    </location>
</feature>
<feature type="strand" evidence="17">
    <location>
        <begin position="2095"/>
        <end position="2097"/>
    </location>
</feature>
<feature type="helix" evidence="17">
    <location>
        <begin position="2099"/>
        <end position="2101"/>
    </location>
</feature>
<feature type="helix" evidence="17">
    <location>
        <begin position="2102"/>
        <end position="2113"/>
    </location>
</feature>
<feature type="helix" evidence="17">
    <location>
        <begin position="2114"/>
        <end position="2116"/>
    </location>
</feature>
<feature type="helix" evidence="17">
    <location>
        <begin position="2118"/>
        <end position="2128"/>
    </location>
</feature>
<feature type="helix" evidence="17">
    <location>
        <begin position="2132"/>
        <end position="2135"/>
    </location>
</feature>
<feature type="helix" evidence="17">
    <location>
        <begin position="2142"/>
        <end position="2150"/>
    </location>
</feature>
<proteinExistence type="evidence at protein level"/>